<sequence>MDAEHLKRLEGREAEHIPDILNEFNKKHADLLVFDSFHSDNQWHELWLAIFGILDDAQLGHLHTQCLNTVRILTRDEFSLQTNYIEHEVSQLLRLARVEASSLKLPATPDELKQQEEGQLQLQEQPSLAQSDIIAEALKCLCNLVYQSADCRRQCLRQHCLDAILKRVASSMRHPCALEYYDMKLLFLLTALEPAARTRLQIDLNGLTYMTKWLDDKLAEPSCSEEQLNIICELLKVMFNVTSAPDKSPNEYEIQSLHLTGVLRELLLRFGKMATDKERSVVTHAINLLTNISSSCLIELTLKCSNAEEQPKKAVEGVAKAKPAKCCALCFEKRNVRCLTVLLNYLRQALAQQEAEASSHELLSPVLTVLVKCSRSDRVMRHYLRQEILPPLRDVSQRPEIGQELRNHLCRFLTLPAMILRDLAAELLFVLCKEDVGRMIKYTGYGNAAGLFAKRGILDCRRVEGADYSSDSEDSDTEEYKKHQQGINPVLGCVEPKSKHNPLDDMTEEQKESEALQLVNLIEQLRQGGIVKPALIDKDGKPQPLEHILQLQEELPQQQLEQKRKT</sequence>
<gene>
    <name type="primary">ric8a</name>
    <name type="synonym">Ric8</name>
    <name type="ORF">GA13961</name>
</gene>
<comment type="function">
    <text evidence="1 2">Chaperone that specifically binds and folds some, but not all, nascent G alpha proteins prior to G protein heterotrimer formation, promoting their stability and activity (By similarity). Also acts as a guanine nucleotide exchange factor (GEF) for G alpha proteins by stimulating exchange of bound GDP for free GTP (By similarity). Plays a key role in asymmetric spindle positioning, a step for asymmetric cell division that generates cell diversity during development by activating G(i) alpha protein independently of G-protein coupled receptors. Required during gastrulation and sensory organ precursor (SOP) formation. Plays a role in positively regulating synapse number and neurotransmitter release (By similarity).</text>
</comment>
<comment type="subunit">
    <text evidence="2">Interacts with GDP-bound G(i)-alpha protein. Does not interact with G-alpha proteins when they are in complex with subunits beta and gamma. Interacts with Frq2 in a Ca(2+)-independent manner but does not interact with Frq1.</text>
</comment>
<comment type="subcellular location">
    <subcellularLocation>
        <location evidence="2">Cytoplasm</location>
        <location evidence="2">Cell cortex</location>
    </subcellularLocation>
    <subcellularLocation>
        <location evidence="2">Presynapse</location>
    </subcellularLocation>
    <subcellularLocation>
        <location evidence="2">Cytoplasm</location>
    </subcellularLocation>
    <text evidence="2">Detected in both type Is boutons and Ib boutons in close proximity to synaptic active zones.</text>
</comment>
<comment type="similarity">
    <text evidence="3">Belongs to the synembryn family.</text>
</comment>
<protein>
    <recommendedName>
        <fullName>Chaperone Ric-8</fullName>
    </recommendedName>
    <alternativeName>
        <fullName>Synembryn</fullName>
    </alternativeName>
</protein>
<accession>Q29IC2</accession>
<organism>
    <name type="scientific">Drosophila pseudoobscura pseudoobscura</name>
    <name type="common">Fruit fly</name>
    <dbReference type="NCBI Taxonomy" id="46245"/>
    <lineage>
        <taxon>Eukaryota</taxon>
        <taxon>Metazoa</taxon>
        <taxon>Ecdysozoa</taxon>
        <taxon>Arthropoda</taxon>
        <taxon>Hexapoda</taxon>
        <taxon>Insecta</taxon>
        <taxon>Pterygota</taxon>
        <taxon>Neoptera</taxon>
        <taxon>Endopterygota</taxon>
        <taxon>Diptera</taxon>
        <taxon>Brachycera</taxon>
        <taxon>Muscomorpha</taxon>
        <taxon>Ephydroidea</taxon>
        <taxon>Drosophilidae</taxon>
        <taxon>Drosophila</taxon>
        <taxon>Sophophora</taxon>
    </lineage>
</organism>
<evidence type="ECO:0000250" key="1">
    <source>
        <dbReference type="UniProtKB" id="Q9GSX9"/>
    </source>
</evidence>
<evidence type="ECO:0000250" key="2">
    <source>
        <dbReference type="UniProtKB" id="Q9W358"/>
    </source>
</evidence>
<evidence type="ECO:0000305" key="3"/>
<proteinExistence type="inferred from homology"/>
<dbReference type="EMBL" id="CH379063">
    <property type="protein sequence ID" value="EAL32731.1"/>
    <property type="molecule type" value="Genomic_DNA"/>
</dbReference>
<dbReference type="RefSeq" id="XP_001355672.1">
    <property type="nucleotide sequence ID" value="XM_001355636.3"/>
</dbReference>
<dbReference type="SMR" id="Q29IC2"/>
<dbReference type="FunCoup" id="Q29IC2">
    <property type="interactions" value="1899"/>
</dbReference>
<dbReference type="STRING" id="46245.Q29IC2"/>
<dbReference type="EnsemblMetazoa" id="FBtr0274228">
    <property type="protein sequence ID" value="FBpp0272666"/>
    <property type="gene ID" value="FBgn0073993"/>
</dbReference>
<dbReference type="GeneID" id="4816097"/>
<dbReference type="KEGG" id="dpo:4816097"/>
<dbReference type="CTD" id="60626"/>
<dbReference type="eggNOG" id="KOG4464">
    <property type="taxonomic scope" value="Eukaryota"/>
</dbReference>
<dbReference type="HOGENOM" id="CLU_018602_1_0_1"/>
<dbReference type="InParanoid" id="Q29IC2"/>
<dbReference type="OMA" id="NADPIFT"/>
<dbReference type="PhylomeDB" id="Q29IC2"/>
<dbReference type="Proteomes" id="UP000001819">
    <property type="component" value="Chromosome X"/>
</dbReference>
<dbReference type="Bgee" id="FBgn0073993">
    <property type="expression patterns" value="Expressed in female reproductive system and 2 other cell types or tissues"/>
</dbReference>
<dbReference type="GO" id="GO:0005938">
    <property type="term" value="C:cell cortex"/>
    <property type="evidence" value="ECO:0007669"/>
    <property type="project" value="UniProtKB-SubCell"/>
</dbReference>
<dbReference type="GO" id="GO:0042995">
    <property type="term" value="C:cell projection"/>
    <property type="evidence" value="ECO:0007669"/>
    <property type="project" value="UniProtKB-KW"/>
</dbReference>
<dbReference type="GO" id="GO:0005737">
    <property type="term" value="C:cytoplasm"/>
    <property type="evidence" value="ECO:0000250"/>
    <property type="project" value="UniProtKB"/>
</dbReference>
<dbReference type="GO" id="GO:0098793">
    <property type="term" value="C:presynapse"/>
    <property type="evidence" value="ECO:0007669"/>
    <property type="project" value="UniProtKB-SubCell"/>
</dbReference>
<dbReference type="GO" id="GO:0001965">
    <property type="term" value="F:G-protein alpha-subunit binding"/>
    <property type="evidence" value="ECO:0000250"/>
    <property type="project" value="UniProtKB"/>
</dbReference>
<dbReference type="GO" id="GO:0005085">
    <property type="term" value="F:guanyl-nucleotide exchange factor activity"/>
    <property type="evidence" value="ECO:0000250"/>
    <property type="project" value="UniProtKB"/>
</dbReference>
<dbReference type="GO" id="GO:0008356">
    <property type="term" value="P:asymmetric cell division"/>
    <property type="evidence" value="ECO:0000250"/>
    <property type="project" value="UniProtKB"/>
</dbReference>
<dbReference type="GO" id="GO:0040001">
    <property type="term" value="P:establishment of mitotic spindle localization"/>
    <property type="evidence" value="ECO:0000250"/>
    <property type="project" value="UniProtKB"/>
</dbReference>
<dbReference type="GO" id="GO:0007163">
    <property type="term" value="P:establishment or maintenance of cell polarity"/>
    <property type="evidence" value="ECO:0000250"/>
    <property type="project" value="UniProtKB"/>
</dbReference>
<dbReference type="GO" id="GO:0007186">
    <property type="term" value="P:G protein-coupled receptor signaling pathway"/>
    <property type="evidence" value="ECO:0007669"/>
    <property type="project" value="TreeGrafter"/>
</dbReference>
<dbReference type="GO" id="GO:0010004">
    <property type="term" value="P:gastrulation involving germ band extension"/>
    <property type="evidence" value="ECO:0000250"/>
    <property type="project" value="UniProtKB"/>
</dbReference>
<dbReference type="GO" id="GO:0055057">
    <property type="term" value="P:neuroblast division"/>
    <property type="evidence" value="ECO:0000250"/>
    <property type="project" value="UniProtKB"/>
</dbReference>
<dbReference type="GO" id="GO:0008104">
    <property type="term" value="P:protein localization"/>
    <property type="evidence" value="ECO:0000250"/>
    <property type="project" value="UniProtKB"/>
</dbReference>
<dbReference type="GO" id="GO:0050821">
    <property type="term" value="P:protein stabilization"/>
    <property type="evidence" value="ECO:0000250"/>
    <property type="project" value="UniProtKB"/>
</dbReference>
<dbReference type="Gene3D" id="1.25.10.10">
    <property type="entry name" value="Leucine-rich Repeat Variant"/>
    <property type="match status" value="1"/>
</dbReference>
<dbReference type="InterPro" id="IPR011989">
    <property type="entry name" value="ARM-like"/>
</dbReference>
<dbReference type="InterPro" id="IPR016024">
    <property type="entry name" value="ARM-type_fold"/>
</dbReference>
<dbReference type="InterPro" id="IPR008376">
    <property type="entry name" value="Chaperone_Ric-8_A/B"/>
</dbReference>
<dbReference type="InterPro" id="IPR019318">
    <property type="entry name" value="Gua_nucleotide_exch_fac_Ric8"/>
</dbReference>
<dbReference type="PANTHER" id="PTHR12425">
    <property type="entry name" value="SYNEMBRYN"/>
    <property type="match status" value="1"/>
</dbReference>
<dbReference type="PANTHER" id="PTHR12425:SF5">
    <property type="entry name" value="SYNEMBRYN"/>
    <property type="match status" value="1"/>
</dbReference>
<dbReference type="Pfam" id="PF10165">
    <property type="entry name" value="Ric8"/>
    <property type="match status" value="1"/>
</dbReference>
<dbReference type="PRINTS" id="PR01802">
    <property type="entry name" value="SYNEMBRYN"/>
</dbReference>
<dbReference type="SUPFAM" id="SSF48371">
    <property type="entry name" value="ARM repeat"/>
    <property type="match status" value="1"/>
</dbReference>
<name>RIC8_DROPS</name>
<feature type="chain" id="PRO_0000235906" description="Chaperone Ric-8">
    <location>
        <begin position="1"/>
        <end position="566"/>
    </location>
</feature>
<reference key="1">
    <citation type="journal article" date="2005" name="Genome Res.">
        <title>Comparative genome sequencing of Drosophila pseudoobscura: chromosomal, gene, and cis-element evolution.</title>
        <authorList>
            <person name="Richards S."/>
            <person name="Liu Y."/>
            <person name="Bettencourt B.R."/>
            <person name="Hradecky P."/>
            <person name="Letovsky S."/>
            <person name="Nielsen R."/>
            <person name="Thornton K."/>
            <person name="Hubisz M.J."/>
            <person name="Chen R."/>
            <person name="Meisel R.P."/>
            <person name="Couronne O."/>
            <person name="Hua S."/>
            <person name="Smith M.A."/>
            <person name="Zhang P."/>
            <person name="Liu J."/>
            <person name="Bussemaker H.J."/>
            <person name="van Batenburg M.F."/>
            <person name="Howells S.L."/>
            <person name="Scherer S.E."/>
            <person name="Sodergren E."/>
            <person name="Matthews B.B."/>
            <person name="Crosby M.A."/>
            <person name="Schroeder A.J."/>
            <person name="Ortiz-Barrientos D."/>
            <person name="Rives C.M."/>
            <person name="Metzker M.L."/>
            <person name="Muzny D.M."/>
            <person name="Scott G."/>
            <person name="Steffen D."/>
            <person name="Wheeler D.A."/>
            <person name="Worley K.C."/>
            <person name="Havlak P."/>
            <person name="Durbin K.J."/>
            <person name="Egan A."/>
            <person name="Gill R."/>
            <person name="Hume J."/>
            <person name="Morgan M.B."/>
            <person name="Miner G."/>
            <person name="Hamilton C."/>
            <person name="Huang Y."/>
            <person name="Waldron L."/>
            <person name="Verduzco D."/>
            <person name="Clerc-Blankenburg K.P."/>
            <person name="Dubchak I."/>
            <person name="Noor M.A.F."/>
            <person name="Anderson W."/>
            <person name="White K.P."/>
            <person name="Clark A.G."/>
            <person name="Schaeffer S.W."/>
            <person name="Gelbart W.M."/>
            <person name="Weinstock G.M."/>
            <person name="Gibbs R.A."/>
        </authorList>
    </citation>
    <scope>NUCLEOTIDE SEQUENCE [LARGE SCALE GENOMIC DNA]</scope>
    <source>
        <strain>MV2-25 / Tucson 14011-0121.94</strain>
    </source>
</reference>
<keyword id="KW-0966">Cell projection</keyword>
<keyword id="KW-0143">Chaperone</keyword>
<keyword id="KW-0963">Cytoplasm</keyword>
<keyword id="KW-0217">Developmental protein</keyword>
<keyword id="KW-0344">Guanine-nucleotide releasing factor</keyword>
<keyword id="KW-1185">Reference proteome</keyword>
<keyword id="KW-0770">Synapse</keyword>